<name>Y1723_BORPA</name>
<sequence length="133" mass="15230">MKKPPSSPAACPCGKPRAYPDCCGRWHAGALFLQAPDAESLMRSRYSAFVLDQLDYLLQTWHPDTRPSELEPNAADVKWLGLQIKASQQQDDTHATVEFVARLRQAGRATRLHELSRFVKEEQRWYYVDGDIR</sequence>
<reference key="1">
    <citation type="journal article" date="2003" name="Nat. Genet.">
        <title>Comparative analysis of the genome sequences of Bordetella pertussis, Bordetella parapertussis and Bordetella bronchiseptica.</title>
        <authorList>
            <person name="Parkhill J."/>
            <person name="Sebaihia M."/>
            <person name="Preston A."/>
            <person name="Murphy L.D."/>
            <person name="Thomson N.R."/>
            <person name="Harris D.E."/>
            <person name="Holden M.T.G."/>
            <person name="Churcher C.M."/>
            <person name="Bentley S.D."/>
            <person name="Mungall K.L."/>
            <person name="Cerdeno-Tarraga A.-M."/>
            <person name="Temple L."/>
            <person name="James K.D."/>
            <person name="Harris B."/>
            <person name="Quail M.A."/>
            <person name="Achtman M."/>
            <person name="Atkin R."/>
            <person name="Baker S."/>
            <person name="Basham D."/>
            <person name="Bason N."/>
            <person name="Cherevach I."/>
            <person name="Chillingworth T."/>
            <person name="Collins M."/>
            <person name="Cronin A."/>
            <person name="Davis P."/>
            <person name="Doggett J."/>
            <person name="Feltwell T."/>
            <person name="Goble A."/>
            <person name="Hamlin N."/>
            <person name="Hauser H."/>
            <person name="Holroyd S."/>
            <person name="Jagels K."/>
            <person name="Leather S."/>
            <person name="Moule S."/>
            <person name="Norberczak H."/>
            <person name="O'Neil S."/>
            <person name="Ormond D."/>
            <person name="Price C."/>
            <person name="Rabbinowitsch E."/>
            <person name="Rutter S."/>
            <person name="Sanders M."/>
            <person name="Saunders D."/>
            <person name="Seeger K."/>
            <person name="Sharp S."/>
            <person name="Simmonds M."/>
            <person name="Skelton J."/>
            <person name="Squares R."/>
            <person name="Squares S."/>
            <person name="Stevens K."/>
            <person name="Unwin L."/>
            <person name="Whitehead S."/>
            <person name="Barrell B.G."/>
            <person name="Maskell D.J."/>
        </authorList>
    </citation>
    <scope>NUCLEOTIDE SEQUENCE [LARGE SCALE GENOMIC DNA]</scope>
    <source>
        <strain>12822 / ATCC BAA-587 / NCTC 13253</strain>
    </source>
</reference>
<proteinExistence type="inferred from homology"/>
<dbReference type="EMBL" id="BX640428">
    <property type="protein sequence ID" value="CAE37024.1"/>
    <property type="molecule type" value="Genomic_DNA"/>
</dbReference>
<dbReference type="RefSeq" id="WP_010928171.1">
    <property type="nucleotide sequence ID" value="NC_002928.3"/>
</dbReference>
<dbReference type="SMR" id="Q7W9N2"/>
<dbReference type="GeneID" id="93203487"/>
<dbReference type="KEGG" id="bpa:BPP1723"/>
<dbReference type="HOGENOM" id="CLU_099590_2_0_4"/>
<dbReference type="Proteomes" id="UP000001421">
    <property type="component" value="Chromosome"/>
</dbReference>
<dbReference type="Gene3D" id="3.10.450.50">
    <property type="match status" value="1"/>
</dbReference>
<dbReference type="HAMAP" id="MF_00612">
    <property type="entry name" value="UPF0225"/>
    <property type="match status" value="1"/>
</dbReference>
<dbReference type="InterPro" id="IPR032710">
    <property type="entry name" value="NTF2-like_dom_sf"/>
</dbReference>
<dbReference type="InterPro" id="IPR023006">
    <property type="entry name" value="UPF0225"/>
</dbReference>
<dbReference type="InterPro" id="IPR048469">
    <property type="entry name" value="YchJ-like_M"/>
</dbReference>
<dbReference type="PANTHER" id="PTHR33747:SF1">
    <property type="entry name" value="ADENYLATE CYCLASE-ASSOCIATED CAP C-TERMINAL DOMAIN-CONTAINING PROTEIN"/>
    <property type="match status" value="1"/>
</dbReference>
<dbReference type="PANTHER" id="PTHR33747">
    <property type="entry name" value="UPF0225 PROTEIN SCO1677"/>
    <property type="match status" value="1"/>
</dbReference>
<dbReference type="Pfam" id="PF17775">
    <property type="entry name" value="YchJ_M-like"/>
    <property type="match status" value="1"/>
</dbReference>
<dbReference type="SUPFAM" id="SSF54427">
    <property type="entry name" value="NTF2-like"/>
    <property type="match status" value="1"/>
</dbReference>
<feature type="chain" id="PRO_0000071797" description="UPF0225 protein BPP1723">
    <location>
        <begin position="1"/>
        <end position="133"/>
    </location>
</feature>
<evidence type="ECO:0000255" key="1">
    <source>
        <dbReference type="HAMAP-Rule" id="MF_00612"/>
    </source>
</evidence>
<protein>
    <recommendedName>
        <fullName evidence="1">UPF0225 protein BPP1723</fullName>
    </recommendedName>
</protein>
<gene>
    <name type="ordered locus">BPP1723</name>
</gene>
<organism>
    <name type="scientific">Bordetella parapertussis (strain 12822 / ATCC BAA-587 / NCTC 13253)</name>
    <dbReference type="NCBI Taxonomy" id="257311"/>
    <lineage>
        <taxon>Bacteria</taxon>
        <taxon>Pseudomonadati</taxon>
        <taxon>Pseudomonadota</taxon>
        <taxon>Betaproteobacteria</taxon>
        <taxon>Burkholderiales</taxon>
        <taxon>Alcaligenaceae</taxon>
        <taxon>Bordetella</taxon>
    </lineage>
</organism>
<accession>Q7W9N2</accession>
<comment type="similarity">
    <text evidence="1">Belongs to the UPF0225 family.</text>
</comment>